<sequence>MGLFGKTQEKPPKELVNEWSLKIRKEMRVVDRQIRDIQREEEKVKRSVKDAAKKGQKDVCVVLAKEMIRSRKAVSKLYASKAHMNSVLMGMKNQLAVLRVAGSLQKSTEVMKAMQSLVKIPEIRATMRELSKEMMKAGIIEEMLEDTFESMDDQEEMEEAAEMEIDRILFEITAGALGKAPSKVTDALPEPEPSGAMAASDEEEEEEEALEAMQSRLATLRS</sequence>
<comment type="function">
    <text evidence="1">Probable core component of the endosomal sorting required for transport complex III (ESCRT-III) which is involved in multivesicular bodies (MVBs) formation and sorting of endosomal cargo proteins into MVBs. MVBs contain intraluminal vesicles (ILVs) that are generated by invagination and scission from the limiting membrane of the endosome and mostly are delivered to lysosomes enabling degradation of membrane proteins, such as stimulated growth factor receptors, lysosomal enzymes and lipids. The MVB pathway appears to require the sequential function of ESCRT-O, -I,-II and -III complexes. ESCRT-III proteins mostly dissociate from the invaginating membrane before the ILV is released. The ESCRT machinery also functions in topologically equivalent membrane fission events, such as the terminal stages of cytokinesis and the budding of enveloped viruses (lentiviruses). ESCRT-III proteins are believed to mediate the necessary vesicle extrusion and/or membrane fission activities, possibly in conjunction with the AAA ATPase VPS4. Selectively binds to phosphatidylinositol 3,5-bisphosphate PtdIns(3,5)P2 and PtdIns(3,4)P2 in preference to other phosphoinositides tested. Involved in late stages of cytokinesis. Plays a role in endosomal sorting/trafficking of EGF receptor (By similarity).</text>
</comment>
<comment type="subunit">
    <text evidence="1">Probable core component of the endosomal sorting required for transport complex III (ESCRT-III). ESCRT-III components are thought to multimerize to form a flat lattice on the perimeter membrane of the endosome. Several assembly forms of ESCRT-III may exist that interact and act sequentially. Forms a metastable monomer in solution; its core structure (without part of the putative autoinhibitory C-terminal acidic region) oligomerizes into a flat lattice via two different dimerization interfaces. In vitro, heteromerizes with CHMP2A (but not CHMP4) to form helical tubular structures that expose membrane-interacting sites on the outside whereas VPS4B can associate on the inside of the tubule. May interact with IGFBP7; the relevance of such interaction however remains unclear. Interacts with CHMP2A. Interacts with CHMP4A; the interaction requires the release of CHMP4A autoinhibition. Interacts with VPS4A. Interacts with STAMBP; the interaction appears to relieve the autoinhibition of CHMP3 (By similarity). Interacts with VTA1 (By similarity).</text>
</comment>
<comment type="subcellular location">
    <subcellularLocation>
        <location evidence="1">Cytoplasm</location>
        <location evidence="1">Cytosol</location>
    </subcellularLocation>
    <subcellularLocation>
        <location evidence="1">Membrane</location>
        <topology evidence="1">Lipid-anchor</topology>
    </subcellularLocation>
    <subcellularLocation>
        <location evidence="1">Endosome</location>
    </subcellularLocation>
    <subcellularLocation>
        <location evidence="1">Late endosome membrane</location>
    </subcellularLocation>
    <text evidence="1">Localizes to the midbody of dividing cells.</text>
</comment>
<comment type="domain">
    <text>The acidic C-terminus and the basic N-termminus are thought to render the protein in a closed, soluble and inactive conformation through an autoinhibitory intramolecular interaction. The open and active conformation, which enables membrane binding and oligomerization, is achieved by interaction with other cellular binding partners, probably including other ESCRT components.</text>
</comment>
<comment type="similarity">
    <text evidence="5">Belongs to the SNF7 family.</text>
</comment>
<evidence type="ECO:0000250" key="1"/>
<evidence type="ECO:0000250" key="2">
    <source>
        <dbReference type="UniProtKB" id="Q9Y3E7"/>
    </source>
</evidence>
<evidence type="ECO:0000255" key="3"/>
<evidence type="ECO:0000256" key="4">
    <source>
        <dbReference type="SAM" id="MobiDB-lite"/>
    </source>
</evidence>
<evidence type="ECO:0000305" key="5"/>
<feature type="initiator methionine" description="Removed" evidence="3">
    <location>
        <position position="1"/>
    </location>
</feature>
<feature type="chain" id="PRO_0000211480" description="Charged multivesicular body protein 3">
    <location>
        <begin position="2"/>
        <end position="222"/>
    </location>
</feature>
<feature type="region of interest" description="Intramolecular interaction with C-terminus" evidence="1">
    <location>
        <begin position="2"/>
        <end position="113"/>
    </location>
</feature>
<feature type="region of interest" description="Important for autoinhibitory function" evidence="1">
    <location>
        <begin position="59"/>
        <end position="64"/>
    </location>
</feature>
<feature type="region of interest" description="Interaction with VPS4A" evidence="1">
    <location>
        <begin position="151"/>
        <end position="222"/>
    </location>
</feature>
<feature type="region of interest" description="Intramolecular interaction with N-terminus" evidence="1">
    <location>
        <begin position="151"/>
        <end position="220"/>
    </location>
</feature>
<feature type="region of interest" description="Important for autoinhibitory function" evidence="1">
    <location>
        <begin position="168"/>
        <end position="169"/>
    </location>
</feature>
<feature type="region of interest" description="Disordered" evidence="4">
    <location>
        <begin position="180"/>
        <end position="222"/>
    </location>
</feature>
<feature type="region of interest" description="Interaction with STAMBP" evidence="1">
    <location>
        <begin position="196"/>
        <end position="222"/>
    </location>
</feature>
<feature type="region of interest" description="Interaction with STAMBP" evidence="1">
    <location>
        <begin position="203"/>
        <end position="207"/>
    </location>
</feature>
<feature type="region of interest" description="Interaction with STAMBP" evidence="1">
    <location>
        <begin position="221"/>
        <end position="222"/>
    </location>
</feature>
<feature type="coiled-coil region" evidence="3">
    <location>
        <begin position="22"/>
        <end position="54"/>
    </location>
</feature>
<feature type="coiled-coil region" evidence="3">
    <location>
        <begin position="149"/>
        <end position="222"/>
    </location>
</feature>
<feature type="short sequence motif" description="MIT-interacting motif">
    <location>
        <begin position="201"/>
        <end position="211"/>
    </location>
</feature>
<feature type="compositionally biased region" description="Acidic residues" evidence="4">
    <location>
        <begin position="200"/>
        <end position="210"/>
    </location>
</feature>
<feature type="site" description="Important for autoinhibitory function" evidence="1">
    <location>
        <position position="48"/>
    </location>
</feature>
<feature type="site" description="Interaction with STAMBP" evidence="1">
    <location>
        <position position="216"/>
    </location>
</feature>
<feature type="modified residue" description="Phosphoserine" evidence="2">
    <location>
        <position position="200"/>
    </location>
</feature>
<feature type="lipid moiety-binding region" description="N-myristoyl glycine" evidence="3">
    <location>
        <position position="2"/>
    </location>
</feature>
<feature type="cross-link" description="Glycyl lysine isopeptide (Lys-Gly) (interchain with G-Cter in ubiquitin)" evidence="2">
    <location>
        <position position="179"/>
    </location>
</feature>
<name>CHMP3_MACFA</name>
<accession>Q4R574</accession>
<keyword id="KW-0131">Cell cycle</keyword>
<keyword id="KW-0132">Cell division</keyword>
<keyword id="KW-0175">Coiled coil</keyword>
<keyword id="KW-0963">Cytoplasm</keyword>
<keyword id="KW-0967">Endosome</keyword>
<keyword id="KW-1017">Isopeptide bond</keyword>
<keyword id="KW-0449">Lipoprotein</keyword>
<keyword id="KW-0472">Membrane</keyword>
<keyword id="KW-0519">Myristate</keyword>
<keyword id="KW-0597">Phosphoprotein</keyword>
<keyword id="KW-0653">Protein transport</keyword>
<keyword id="KW-1185">Reference proteome</keyword>
<keyword id="KW-0813">Transport</keyword>
<keyword id="KW-0832">Ubl conjugation</keyword>
<gene>
    <name type="primary">CHMP3</name>
    <name type="synonym">VPS24</name>
    <name type="ORF">QccE-16114</name>
</gene>
<dbReference type="EMBL" id="AB169670">
    <property type="protein sequence ID" value="BAE01751.1"/>
    <property type="molecule type" value="mRNA"/>
</dbReference>
<dbReference type="SMR" id="Q4R574"/>
<dbReference type="STRING" id="9541.ENSMFAP00000024393"/>
<dbReference type="eggNOG" id="KOG3229">
    <property type="taxonomic scope" value="Eukaryota"/>
</dbReference>
<dbReference type="Proteomes" id="UP000233100">
    <property type="component" value="Unplaced"/>
</dbReference>
<dbReference type="GO" id="GO:1904930">
    <property type="term" value="C:amphisome membrane"/>
    <property type="evidence" value="ECO:0007669"/>
    <property type="project" value="UniProtKB-ARBA"/>
</dbReference>
<dbReference type="GO" id="GO:0005829">
    <property type="term" value="C:cytosol"/>
    <property type="evidence" value="ECO:0007669"/>
    <property type="project" value="UniProtKB-SubCell"/>
</dbReference>
<dbReference type="GO" id="GO:0000776">
    <property type="term" value="C:kinetochore"/>
    <property type="evidence" value="ECO:0007669"/>
    <property type="project" value="UniProtKB-ARBA"/>
</dbReference>
<dbReference type="GO" id="GO:0005828">
    <property type="term" value="C:kinetochore microtubule"/>
    <property type="evidence" value="ECO:0007669"/>
    <property type="project" value="UniProtKB-ARBA"/>
</dbReference>
<dbReference type="GO" id="GO:0005765">
    <property type="term" value="C:lysosomal membrane"/>
    <property type="evidence" value="ECO:0007669"/>
    <property type="project" value="UniProtKB-ARBA"/>
</dbReference>
<dbReference type="GO" id="GO:0030496">
    <property type="term" value="C:midbody"/>
    <property type="evidence" value="ECO:0007669"/>
    <property type="project" value="UniProtKB-ARBA"/>
</dbReference>
<dbReference type="GO" id="GO:0032585">
    <property type="term" value="C:multivesicular body membrane"/>
    <property type="evidence" value="ECO:0007669"/>
    <property type="project" value="UniProtKB-ARBA"/>
</dbReference>
<dbReference type="GO" id="GO:0005643">
    <property type="term" value="C:nuclear pore"/>
    <property type="evidence" value="ECO:0007669"/>
    <property type="project" value="UniProtKB-ARBA"/>
</dbReference>
<dbReference type="GO" id="GO:0097352">
    <property type="term" value="P:autophagosome maturation"/>
    <property type="evidence" value="ECO:0007669"/>
    <property type="project" value="UniProtKB-ARBA"/>
</dbReference>
<dbReference type="GO" id="GO:1902774">
    <property type="term" value="P:late endosome to lysosome transport"/>
    <property type="evidence" value="ECO:0007669"/>
    <property type="project" value="UniProtKB-ARBA"/>
</dbReference>
<dbReference type="GO" id="GO:0061952">
    <property type="term" value="P:midbody abscission"/>
    <property type="evidence" value="ECO:0007669"/>
    <property type="project" value="UniProtKB-ARBA"/>
</dbReference>
<dbReference type="GO" id="GO:0007080">
    <property type="term" value="P:mitotic metaphase chromosome alignment"/>
    <property type="evidence" value="ECO:0007669"/>
    <property type="project" value="UniProtKB-ARBA"/>
</dbReference>
<dbReference type="GO" id="GO:0071985">
    <property type="term" value="P:multivesicular body sorting pathway"/>
    <property type="evidence" value="ECO:0007669"/>
    <property type="project" value="UniProtKB-ARBA"/>
</dbReference>
<dbReference type="GO" id="GO:0031468">
    <property type="term" value="P:nuclear membrane reassembly"/>
    <property type="evidence" value="ECO:0007669"/>
    <property type="project" value="UniProtKB-ARBA"/>
</dbReference>
<dbReference type="GO" id="GO:0001778">
    <property type="term" value="P:plasma membrane repair"/>
    <property type="evidence" value="ECO:0007669"/>
    <property type="project" value="UniProtKB-ARBA"/>
</dbReference>
<dbReference type="GO" id="GO:0015031">
    <property type="term" value="P:protein transport"/>
    <property type="evidence" value="ECO:0007669"/>
    <property type="project" value="UniProtKB-KW"/>
</dbReference>
<dbReference type="GO" id="GO:1901673">
    <property type="term" value="P:regulation of mitotic spindle assembly"/>
    <property type="evidence" value="ECO:0007669"/>
    <property type="project" value="UniProtKB-ARBA"/>
</dbReference>
<dbReference type="GO" id="GO:0043162">
    <property type="term" value="P:ubiquitin-dependent protein catabolic process via the multivesicular body sorting pathway"/>
    <property type="evidence" value="ECO:0007669"/>
    <property type="project" value="UniProtKB-ARBA"/>
</dbReference>
<dbReference type="GO" id="GO:0046761">
    <property type="term" value="P:viral budding from plasma membrane"/>
    <property type="evidence" value="ECO:0007669"/>
    <property type="project" value="UniProtKB-ARBA"/>
</dbReference>
<dbReference type="GO" id="GO:0039702">
    <property type="term" value="P:viral budding via host ESCRT complex"/>
    <property type="evidence" value="ECO:0007669"/>
    <property type="project" value="UniProtKB-ARBA"/>
</dbReference>
<dbReference type="Gene3D" id="6.10.140.1230">
    <property type="match status" value="1"/>
</dbReference>
<dbReference type="InterPro" id="IPR005024">
    <property type="entry name" value="Snf7_fam"/>
</dbReference>
<dbReference type="PANTHER" id="PTHR10476">
    <property type="entry name" value="CHARGED MULTIVESICULAR BODY PROTEIN"/>
    <property type="match status" value="1"/>
</dbReference>
<dbReference type="Pfam" id="PF03357">
    <property type="entry name" value="Snf7"/>
    <property type="match status" value="1"/>
</dbReference>
<organism>
    <name type="scientific">Macaca fascicularis</name>
    <name type="common">Crab-eating macaque</name>
    <name type="synonym">Cynomolgus monkey</name>
    <dbReference type="NCBI Taxonomy" id="9541"/>
    <lineage>
        <taxon>Eukaryota</taxon>
        <taxon>Metazoa</taxon>
        <taxon>Chordata</taxon>
        <taxon>Craniata</taxon>
        <taxon>Vertebrata</taxon>
        <taxon>Euteleostomi</taxon>
        <taxon>Mammalia</taxon>
        <taxon>Eutheria</taxon>
        <taxon>Euarchontoglires</taxon>
        <taxon>Primates</taxon>
        <taxon>Haplorrhini</taxon>
        <taxon>Catarrhini</taxon>
        <taxon>Cercopithecidae</taxon>
        <taxon>Cercopithecinae</taxon>
        <taxon>Macaca</taxon>
    </lineage>
</organism>
<protein>
    <recommendedName>
        <fullName>Charged multivesicular body protein 3</fullName>
    </recommendedName>
    <alternativeName>
        <fullName>Chromatin-modifying protein 3</fullName>
    </alternativeName>
    <alternativeName>
        <fullName>Vacuolar protein sorting-associated protein 24</fullName>
    </alternativeName>
</protein>
<reference key="1">
    <citation type="submission" date="2005-06" db="EMBL/GenBank/DDBJ databases">
        <title>DNA sequences of macaque genes expressed in brain or testis and its evolutionary implications.</title>
        <authorList>
            <consortium name="International consortium for macaque cDNA sequencing and analysis"/>
        </authorList>
    </citation>
    <scope>NUCLEOTIDE SEQUENCE [LARGE SCALE MRNA]</scope>
    <source>
        <tissue>Brain cortex</tissue>
    </source>
</reference>
<proteinExistence type="evidence at transcript level"/>